<feature type="chain" id="PRO_0000189287" description="4-diphosphocytidyl-2-C-methyl-D-erythritol kinase">
    <location>
        <begin position="1"/>
        <end position="290"/>
    </location>
</feature>
<feature type="active site" evidence="1">
    <location>
        <position position="13"/>
    </location>
</feature>
<feature type="active site" evidence="1">
    <location>
        <position position="138"/>
    </location>
</feature>
<feature type="binding site" evidence="1">
    <location>
        <begin position="96"/>
        <end position="106"/>
    </location>
    <ligand>
        <name>ATP</name>
        <dbReference type="ChEBI" id="CHEBI:30616"/>
    </ligand>
</feature>
<keyword id="KW-0067">ATP-binding</keyword>
<keyword id="KW-0414">Isoprene biosynthesis</keyword>
<keyword id="KW-0418">Kinase</keyword>
<keyword id="KW-0547">Nucleotide-binding</keyword>
<keyword id="KW-0808">Transferase</keyword>
<evidence type="ECO:0000255" key="1">
    <source>
        <dbReference type="HAMAP-Rule" id="MF_00061"/>
    </source>
</evidence>
<evidence type="ECO:0000305" key="2"/>
<dbReference type="EC" id="2.7.1.148" evidence="1"/>
<dbReference type="EMBL" id="AE016795">
    <property type="protein sequence ID" value="AAO08792.2"/>
    <property type="status" value="ALT_INIT"/>
    <property type="molecule type" value="Genomic_DNA"/>
</dbReference>
<dbReference type="RefSeq" id="WP_011078370.1">
    <property type="nucleotide sequence ID" value="NC_004459.3"/>
</dbReference>
<dbReference type="SMR" id="Q8DFF6"/>
<dbReference type="KEGG" id="vvu:VV1_0256"/>
<dbReference type="HOGENOM" id="CLU_053057_3_0_6"/>
<dbReference type="UniPathway" id="UPA00056">
    <property type="reaction ID" value="UER00094"/>
</dbReference>
<dbReference type="Proteomes" id="UP000002275">
    <property type="component" value="Chromosome 1"/>
</dbReference>
<dbReference type="GO" id="GO:0050515">
    <property type="term" value="F:4-(cytidine 5'-diphospho)-2-C-methyl-D-erythritol kinase activity"/>
    <property type="evidence" value="ECO:0007669"/>
    <property type="project" value="UniProtKB-UniRule"/>
</dbReference>
<dbReference type="GO" id="GO:0005524">
    <property type="term" value="F:ATP binding"/>
    <property type="evidence" value="ECO:0007669"/>
    <property type="project" value="UniProtKB-UniRule"/>
</dbReference>
<dbReference type="GO" id="GO:0019288">
    <property type="term" value="P:isopentenyl diphosphate biosynthetic process, methylerythritol 4-phosphate pathway"/>
    <property type="evidence" value="ECO:0007669"/>
    <property type="project" value="UniProtKB-UniRule"/>
</dbReference>
<dbReference type="GO" id="GO:0016114">
    <property type="term" value="P:terpenoid biosynthetic process"/>
    <property type="evidence" value="ECO:0007669"/>
    <property type="project" value="InterPro"/>
</dbReference>
<dbReference type="FunFam" id="3.30.230.10:FF:000022">
    <property type="entry name" value="4-diphosphocytidyl-2-C-methyl-D-erythritol kinase"/>
    <property type="match status" value="1"/>
</dbReference>
<dbReference type="FunFam" id="3.30.70.890:FF:000004">
    <property type="entry name" value="4-diphosphocytidyl-2-C-methyl-D-erythritol kinase"/>
    <property type="match status" value="1"/>
</dbReference>
<dbReference type="Gene3D" id="3.30.230.10">
    <property type="match status" value="1"/>
</dbReference>
<dbReference type="Gene3D" id="3.30.70.890">
    <property type="entry name" value="GHMP kinase, C-terminal domain"/>
    <property type="match status" value="1"/>
</dbReference>
<dbReference type="HAMAP" id="MF_00061">
    <property type="entry name" value="IspE"/>
    <property type="match status" value="1"/>
</dbReference>
<dbReference type="InterPro" id="IPR013750">
    <property type="entry name" value="GHMP_kinase_C_dom"/>
</dbReference>
<dbReference type="InterPro" id="IPR036554">
    <property type="entry name" value="GHMP_kinase_C_sf"/>
</dbReference>
<dbReference type="InterPro" id="IPR006204">
    <property type="entry name" value="GHMP_kinase_N_dom"/>
</dbReference>
<dbReference type="InterPro" id="IPR004424">
    <property type="entry name" value="IspE"/>
</dbReference>
<dbReference type="InterPro" id="IPR020568">
    <property type="entry name" value="Ribosomal_Su5_D2-typ_SF"/>
</dbReference>
<dbReference type="InterPro" id="IPR014721">
    <property type="entry name" value="Ribsml_uS5_D2-typ_fold_subgr"/>
</dbReference>
<dbReference type="NCBIfam" id="TIGR00154">
    <property type="entry name" value="ispE"/>
    <property type="match status" value="1"/>
</dbReference>
<dbReference type="PANTHER" id="PTHR43527">
    <property type="entry name" value="4-DIPHOSPHOCYTIDYL-2-C-METHYL-D-ERYTHRITOL KINASE, CHLOROPLASTIC"/>
    <property type="match status" value="1"/>
</dbReference>
<dbReference type="PANTHER" id="PTHR43527:SF2">
    <property type="entry name" value="4-DIPHOSPHOCYTIDYL-2-C-METHYL-D-ERYTHRITOL KINASE, CHLOROPLASTIC"/>
    <property type="match status" value="1"/>
</dbReference>
<dbReference type="Pfam" id="PF08544">
    <property type="entry name" value="GHMP_kinases_C"/>
    <property type="match status" value="1"/>
</dbReference>
<dbReference type="Pfam" id="PF00288">
    <property type="entry name" value="GHMP_kinases_N"/>
    <property type="match status" value="1"/>
</dbReference>
<dbReference type="PIRSF" id="PIRSF010376">
    <property type="entry name" value="IspE"/>
    <property type="match status" value="1"/>
</dbReference>
<dbReference type="SUPFAM" id="SSF55060">
    <property type="entry name" value="GHMP Kinase, C-terminal domain"/>
    <property type="match status" value="1"/>
</dbReference>
<dbReference type="SUPFAM" id="SSF54211">
    <property type="entry name" value="Ribosomal protein S5 domain 2-like"/>
    <property type="match status" value="1"/>
</dbReference>
<accession>Q8DFF6</accession>
<sequence>MITSPTTWPSPAKLNLFLYINGRTDNGYHELQTLFQFLDHGDQLTITANDSGHITLTPDIVDLPVEQNLIWKAANALQKKTGCTLGANIHLNKILPMGGGIGGGSSNAATALVALNFLWQLGLSDDELADIGLKLGADVPVFVRGHAAFAEGVGEKLTPAQPEEKWYLVVRPDVHIATVDIFTHPQLTRNTPKRSLETLLDSEYGNDCEKIVRMIHPKVDKQLSWLLQYAPSRLTGTGSCVFAEFNSRSEAESILAQLSDNVSAFVAQGRNISPLKETLADYLSAQNRPI</sequence>
<reference key="1">
    <citation type="submission" date="2002-12" db="EMBL/GenBank/DDBJ databases">
        <title>Complete genome sequence of Vibrio vulnificus CMCP6.</title>
        <authorList>
            <person name="Rhee J.H."/>
            <person name="Kim S.Y."/>
            <person name="Chung S.S."/>
            <person name="Kim J.J."/>
            <person name="Moon Y.H."/>
            <person name="Jeong H."/>
            <person name="Choy H.E."/>
        </authorList>
    </citation>
    <scope>NUCLEOTIDE SEQUENCE [LARGE SCALE GENOMIC DNA]</scope>
    <source>
        <strain>CMCP6</strain>
    </source>
</reference>
<name>ISPE_VIBVU</name>
<protein>
    <recommendedName>
        <fullName evidence="1">4-diphosphocytidyl-2-C-methyl-D-erythritol kinase</fullName>
        <shortName evidence="1">CMK</shortName>
        <ecNumber evidence="1">2.7.1.148</ecNumber>
    </recommendedName>
    <alternativeName>
        <fullName evidence="1">4-(cytidine-5'-diphospho)-2-C-methyl-D-erythritol kinase</fullName>
    </alternativeName>
</protein>
<proteinExistence type="inferred from homology"/>
<gene>
    <name evidence="1" type="primary">ispE</name>
    <name type="ordered locus">VV1_0256</name>
</gene>
<comment type="function">
    <text evidence="1">Catalyzes the phosphorylation of the position 2 hydroxy group of 4-diphosphocytidyl-2C-methyl-D-erythritol.</text>
</comment>
<comment type="catalytic activity">
    <reaction evidence="1">
        <text>4-CDP-2-C-methyl-D-erythritol + ATP = 4-CDP-2-C-methyl-D-erythritol 2-phosphate + ADP + H(+)</text>
        <dbReference type="Rhea" id="RHEA:18437"/>
        <dbReference type="ChEBI" id="CHEBI:15378"/>
        <dbReference type="ChEBI" id="CHEBI:30616"/>
        <dbReference type="ChEBI" id="CHEBI:57823"/>
        <dbReference type="ChEBI" id="CHEBI:57919"/>
        <dbReference type="ChEBI" id="CHEBI:456216"/>
        <dbReference type="EC" id="2.7.1.148"/>
    </reaction>
</comment>
<comment type="pathway">
    <text evidence="1">Isoprenoid biosynthesis; isopentenyl diphosphate biosynthesis via DXP pathway; isopentenyl diphosphate from 1-deoxy-D-xylulose 5-phosphate: step 3/6.</text>
</comment>
<comment type="similarity">
    <text evidence="1">Belongs to the GHMP kinase family. IspE subfamily.</text>
</comment>
<comment type="sequence caution" evidence="2">
    <conflict type="erroneous initiation">
        <sequence resource="EMBL-CDS" id="AAO08792"/>
    </conflict>
    <text>Extended N-terminus.</text>
</comment>
<organism>
    <name type="scientific">Vibrio vulnificus (strain CMCP6)</name>
    <dbReference type="NCBI Taxonomy" id="216895"/>
    <lineage>
        <taxon>Bacteria</taxon>
        <taxon>Pseudomonadati</taxon>
        <taxon>Pseudomonadota</taxon>
        <taxon>Gammaproteobacteria</taxon>
        <taxon>Vibrionales</taxon>
        <taxon>Vibrionaceae</taxon>
        <taxon>Vibrio</taxon>
    </lineage>
</organism>